<protein>
    <recommendedName>
        <fullName evidence="1">Chromosome partition protein MukE</fullName>
    </recommendedName>
</protein>
<reference key="1">
    <citation type="journal article" date="2003" name="Genome Res.">
        <title>Comparative genome analysis of Vibrio vulnificus, a marine pathogen.</title>
        <authorList>
            <person name="Chen C.-Y."/>
            <person name="Wu K.-M."/>
            <person name="Chang Y.-C."/>
            <person name="Chang C.-H."/>
            <person name="Tsai H.-C."/>
            <person name="Liao T.-L."/>
            <person name="Liu Y.-M."/>
            <person name="Chen H.-J."/>
            <person name="Shen A.B.-T."/>
            <person name="Li J.-C."/>
            <person name="Su T.-L."/>
            <person name="Shao C.-P."/>
            <person name="Lee C.-T."/>
            <person name="Hor L.-I."/>
            <person name="Tsai S.-F."/>
        </authorList>
    </citation>
    <scope>NUCLEOTIDE SEQUENCE [LARGE SCALE GENOMIC DNA]</scope>
    <source>
        <strain>YJ016</strain>
    </source>
</reference>
<feature type="chain" id="PRO_0000206807" description="Chromosome partition protein MukE">
    <location>
        <begin position="1"/>
        <end position="231"/>
    </location>
</feature>
<feature type="region of interest" description="Disordered" evidence="2">
    <location>
        <begin position="211"/>
        <end position="231"/>
    </location>
</feature>
<feature type="compositionally biased region" description="Acidic residues" evidence="2">
    <location>
        <begin position="214"/>
        <end position="231"/>
    </location>
</feature>
<name>MUKE_VIBVY</name>
<comment type="function">
    <text evidence="1">Involved in chromosome condensation, segregation and cell cycle progression. May participate in facilitating chromosome segregation by condensation DNA from both sides of a centrally located replisome during cell division. Probably acts via its interaction with MukB and MukF.</text>
</comment>
<comment type="subunit">
    <text evidence="1">Interacts, and probably forms a ternary complex, with MukF and MukB. The complex formation is stimulated by calcium or magnesium.</text>
</comment>
<comment type="subcellular location">
    <subcellularLocation>
        <location evidence="1">Cytoplasm</location>
        <location evidence="1">Nucleoid</location>
    </subcellularLocation>
    <text evidence="1">Restricted to the nucleoid region.</text>
</comment>
<comment type="similarity">
    <text evidence="1">Belongs to the MukE family.</text>
</comment>
<comment type="sequence caution" evidence="3">
    <conflict type="erroneous initiation">
        <sequence resource="EMBL-CDS" id="BAC95063"/>
    </conflict>
</comment>
<accession>Q7MJ63</accession>
<dbReference type="EMBL" id="BA000037">
    <property type="protein sequence ID" value="BAC95063.1"/>
    <property type="status" value="ALT_INIT"/>
    <property type="molecule type" value="Genomic_DNA"/>
</dbReference>
<dbReference type="SMR" id="Q7MJ63"/>
<dbReference type="STRING" id="672.VV93_v1c20110"/>
<dbReference type="KEGG" id="vvy:VV2299"/>
<dbReference type="eggNOG" id="COG3095">
    <property type="taxonomic scope" value="Bacteria"/>
</dbReference>
<dbReference type="HOGENOM" id="CLU_1146408_0_0_6"/>
<dbReference type="Proteomes" id="UP000002675">
    <property type="component" value="Chromosome I"/>
</dbReference>
<dbReference type="GO" id="GO:0005737">
    <property type="term" value="C:cytoplasm"/>
    <property type="evidence" value="ECO:0007669"/>
    <property type="project" value="UniProtKB-UniRule"/>
</dbReference>
<dbReference type="GO" id="GO:0009295">
    <property type="term" value="C:nucleoid"/>
    <property type="evidence" value="ECO:0007669"/>
    <property type="project" value="UniProtKB-SubCell"/>
</dbReference>
<dbReference type="GO" id="GO:0051301">
    <property type="term" value="P:cell division"/>
    <property type="evidence" value="ECO:0007669"/>
    <property type="project" value="UniProtKB-KW"/>
</dbReference>
<dbReference type="GO" id="GO:0030261">
    <property type="term" value="P:chromosome condensation"/>
    <property type="evidence" value="ECO:0007669"/>
    <property type="project" value="UniProtKB-KW"/>
</dbReference>
<dbReference type="GO" id="GO:0007059">
    <property type="term" value="P:chromosome segregation"/>
    <property type="evidence" value="ECO:0007669"/>
    <property type="project" value="UniProtKB-UniRule"/>
</dbReference>
<dbReference type="GO" id="GO:0006260">
    <property type="term" value="P:DNA replication"/>
    <property type="evidence" value="ECO:0007669"/>
    <property type="project" value="UniProtKB-UniRule"/>
</dbReference>
<dbReference type="Gene3D" id="1.10.10.2250">
    <property type="match status" value="1"/>
</dbReference>
<dbReference type="Gene3D" id="1.10.10.2260">
    <property type="entry name" value="MukE-like family, C-terminal domain"/>
    <property type="match status" value="1"/>
</dbReference>
<dbReference type="HAMAP" id="MF_01802">
    <property type="entry name" value="MukE"/>
    <property type="match status" value="1"/>
</dbReference>
<dbReference type="InterPro" id="IPR042037">
    <property type="entry name" value="MukE_C"/>
</dbReference>
<dbReference type="InterPro" id="IPR042038">
    <property type="entry name" value="MukE_N"/>
</dbReference>
<dbReference type="InterPro" id="IPR007385">
    <property type="entry name" value="Scp_MukE"/>
</dbReference>
<dbReference type="NCBIfam" id="NF003602">
    <property type="entry name" value="PRK05256.1"/>
    <property type="match status" value="1"/>
</dbReference>
<dbReference type="Pfam" id="PF04288">
    <property type="entry name" value="MukE"/>
    <property type="match status" value="1"/>
</dbReference>
<organism>
    <name type="scientific">Vibrio vulnificus (strain YJ016)</name>
    <dbReference type="NCBI Taxonomy" id="196600"/>
    <lineage>
        <taxon>Bacteria</taxon>
        <taxon>Pseudomonadati</taxon>
        <taxon>Pseudomonadota</taxon>
        <taxon>Gammaproteobacteria</taxon>
        <taxon>Vibrionales</taxon>
        <taxon>Vibrionaceae</taxon>
        <taxon>Vibrio</taxon>
    </lineage>
</organism>
<gene>
    <name evidence="1" type="primary">mukE</name>
    <name type="ordered locus">VV2299</name>
</gene>
<proteinExistence type="inferred from homology"/>
<keyword id="KW-0131">Cell cycle</keyword>
<keyword id="KW-0132">Cell division</keyword>
<keyword id="KW-0159">Chromosome partition</keyword>
<keyword id="KW-0963">Cytoplasm</keyword>
<keyword id="KW-0226">DNA condensation</keyword>
<sequence>MPENLAKAICNPLFPALDSMLRAGRHISSEDLDNHALLSDYEVELSAFYQRYNTELVKAPEGFFYLRPRSTSLIARSVLSELDMLVGKVLCFLYLSPERLAHEGIFTNQELYEELIALTDEKKLMKLVTNRASGSDLDREKLFEKVRTSLRRLRRLGMIINVGDSGKFSISEAVFRFGADVRAGDDIREAQLRLIRDGEAVVHTQEPTQASLLADEEEQDYNEQAELEGEA</sequence>
<evidence type="ECO:0000255" key="1">
    <source>
        <dbReference type="HAMAP-Rule" id="MF_01802"/>
    </source>
</evidence>
<evidence type="ECO:0000256" key="2">
    <source>
        <dbReference type="SAM" id="MobiDB-lite"/>
    </source>
</evidence>
<evidence type="ECO:0000305" key="3"/>